<keyword id="KW-0002">3D-structure</keyword>
<keyword id="KW-0150">Chloroplast</keyword>
<keyword id="KW-0472">Membrane</keyword>
<keyword id="KW-0602">Photosynthesis</keyword>
<keyword id="KW-0603">Photosystem I</keyword>
<keyword id="KW-0934">Plastid</keyword>
<keyword id="KW-1185">Reference proteome</keyword>
<keyword id="KW-0793">Thylakoid</keyword>
<keyword id="KW-0812">Transmembrane</keyword>
<keyword id="KW-1133">Transmembrane helix</keyword>
<reference key="1">
    <citation type="journal article" date="2007" name="Mol. Biol. Evol.">
        <title>The complete chloroplast and mitochondrial DNA sequence of Ostreococcus tauri: organelle genomes of the smallest eukaryote are examples of compaction.</title>
        <authorList>
            <person name="Robbens S."/>
            <person name="Derelle E."/>
            <person name="Ferraz C."/>
            <person name="Wuyts J."/>
            <person name="Moreau H."/>
            <person name="Van de Peer Y."/>
        </authorList>
    </citation>
    <scope>NUCLEOTIDE SEQUENCE [LARGE SCALE GENOMIC DNA]</scope>
    <source>
        <strain>OTTH0595</strain>
    </source>
</reference>
<organism>
    <name type="scientific">Ostreococcus tauri</name>
    <dbReference type="NCBI Taxonomy" id="70448"/>
    <lineage>
        <taxon>Eukaryota</taxon>
        <taxon>Viridiplantae</taxon>
        <taxon>Chlorophyta</taxon>
        <taxon>Mamiellophyceae</taxon>
        <taxon>Mamiellales</taxon>
        <taxon>Bathycoccaceae</taxon>
        <taxon>Ostreococcus</taxon>
    </lineage>
</organism>
<name>PSAJ_OSTTA</name>
<feature type="chain" id="PRO_0000276068" description="Photosystem I reaction center subunit IX">
    <location>
        <begin position="1"/>
        <end position="42"/>
    </location>
</feature>
<feature type="transmembrane region" description="Helical" evidence="1">
    <location>
        <begin position="7"/>
        <end position="27"/>
    </location>
</feature>
<feature type="helix" evidence="2">
    <location>
        <begin position="2"/>
        <end position="8"/>
    </location>
</feature>
<feature type="helix" evidence="2">
    <location>
        <begin position="11"/>
        <end position="32"/>
    </location>
</feature>
<gene>
    <name evidence="1" type="primary">psaJ</name>
    <name type="ordered locus">OtCpg00580</name>
</gene>
<comment type="function">
    <text evidence="1">May help in the organization of the PsaE and PsaF subunits.</text>
</comment>
<comment type="subcellular location">
    <subcellularLocation>
        <location evidence="1">Plastid</location>
        <location evidence="1">Chloroplast thylakoid membrane</location>
        <topology evidence="1">Single-pass membrane protein</topology>
    </subcellularLocation>
</comment>
<comment type="similarity">
    <text evidence="1">Belongs to the PsaJ family.</text>
</comment>
<dbReference type="EMBL" id="CR954199">
    <property type="protein sequence ID" value="CAL36383.1"/>
    <property type="molecule type" value="Genomic_DNA"/>
</dbReference>
<dbReference type="RefSeq" id="YP_717261.1">
    <property type="nucleotide sequence ID" value="NC_008289.1"/>
</dbReference>
<dbReference type="PDB" id="7YCA">
    <property type="method" value="EM"/>
    <property type="resolution" value="2.94 A"/>
    <property type="chains" value="J=1-42"/>
</dbReference>
<dbReference type="PDBsum" id="7YCA"/>
<dbReference type="EMDB" id="EMD-33737"/>
<dbReference type="SMR" id="Q0P3J4"/>
<dbReference type="FunCoup" id="Q0P3J4">
    <property type="interactions" value="32"/>
</dbReference>
<dbReference type="STRING" id="70448.Q0P3J4"/>
<dbReference type="GeneID" id="4238877"/>
<dbReference type="KEGG" id="ota:OstapCp58"/>
<dbReference type="eggNOG" id="ENOG502SEIN">
    <property type="taxonomic scope" value="Eukaryota"/>
</dbReference>
<dbReference type="InParanoid" id="Q0P3J4"/>
<dbReference type="Proteomes" id="UP000009170">
    <property type="component" value="Chloroplast"/>
</dbReference>
<dbReference type="GO" id="GO:0009535">
    <property type="term" value="C:chloroplast thylakoid membrane"/>
    <property type="evidence" value="ECO:0007669"/>
    <property type="project" value="UniProtKB-SubCell"/>
</dbReference>
<dbReference type="GO" id="GO:0009522">
    <property type="term" value="C:photosystem I"/>
    <property type="evidence" value="ECO:0007669"/>
    <property type="project" value="UniProtKB-KW"/>
</dbReference>
<dbReference type="GO" id="GO:0015979">
    <property type="term" value="P:photosynthesis"/>
    <property type="evidence" value="ECO:0007669"/>
    <property type="project" value="UniProtKB-UniRule"/>
</dbReference>
<dbReference type="Gene3D" id="1.20.5.510">
    <property type="entry name" value="Single helix bin"/>
    <property type="match status" value="1"/>
</dbReference>
<dbReference type="HAMAP" id="MF_00522">
    <property type="entry name" value="PSI_PsaJ"/>
    <property type="match status" value="1"/>
</dbReference>
<dbReference type="InterPro" id="IPR002615">
    <property type="entry name" value="PSI_PsaJ"/>
</dbReference>
<dbReference type="InterPro" id="IPR036062">
    <property type="entry name" value="PSI_PsaJ_sf"/>
</dbReference>
<dbReference type="PANTHER" id="PTHR36082">
    <property type="match status" value="1"/>
</dbReference>
<dbReference type="PANTHER" id="PTHR36082:SF2">
    <property type="entry name" value="PHOTOSYSTEM I REACTION CENTER SUBUNIT IX"/>
    <property type="match status" value="1"/>
</dbReference>
<dbReference type="Pfam" id="PF01701">
    <property type="entry name" value="PSI_PsaJ"/>
    <property type="match status" value="1"/>
</dbReference>
<dbReference type="SUPFAM" id="SSF81544">
    <property type="entry name" value="Subunit IX of photosystem I reaction centre, PsaJ"/>
    <property type="match status" value="1"/>
</dbReference>
<evidence type="ECO:0000255" key="1">
    <source>
        <dbReference type="HAMAP-Rule" id="MF_00522"/>
    </source>
</evidence>
<evidence type="ECO:0007829" key="2">
    <source>
        <dbReference type="PDB" id="7YCA"/>
    </source>
</evidence>
<accession>Q0P3J4</accession>
<protein>
    <recommendedName>
        <fullName evidence="1">Photosystem I reaction center subunit IX</fullName>
    </recommendedName>
    <alternativeName>
        <fullName evidence="1">PSI-J</fullName>
    </alternativeName>
</protein>
<geneLocation type="chloroplast"/>
<proteinExistence type="evidence at protein level"/>
<sequence>MKNFQIYLSTAPVLAAVWFTVLAGILIELNRFFPDALSFPLT</sequence>